<comment type="catalytic activity">
    <reaction evidence="1">
        <text>tRNA(Gln) + L-glutamine + ATP = L-glutaminyl-tRNA(Gln) + AMP + diphosphate</text>
        <dbReference type="Rhea" id="RHEA:20121"/>
        <dbReference type="Rhea" id="RHEA-COMP:9662"/>
        <dbReference type="Rhea" id="RHEA-COMP:9681"/>
        <dbReference type="ChEBI" id="CHEBI:30616"/>
        <dbReference type="ChEBI" id="CHEBI:33019"/>
        <dbReference type="ChEBI" id="CHEBI:58359"/>
        <dbReference type="ChEBI" id="CHEBI:78442"/>
        <dbReference type="ChEBI" id="CHEBI:78521"/>
        <dbReference type="ChEBI" id="CHEBI:456215"/>
        <dbReference type="EC" id="6.1.1.18"/>
    </reaction>
</comment>
<comment type="subunit">
    <text evidence="1">Monomer.</text>
</comment>
<comment type="subcellular location">
    <subcellularLocation>
        <location evidence="1">Cytoplasm</location>
    </subcellularLocation>
</comment>
<comment type="similarity">
    <text evidence="1">Belongs to the class-I aminoacyl-tRNA synthetase family.</text>
</comment>
<name>SYQ_PROMH</name>
<evidence type="ECO:0000255" key="1">
    <source>
        <dbReference type="HAMAP-Rule" id="MF_00126"/>
    </source>
</evidence>
<feature type="chain" id="PRO_1000095498" description="Glutamine--tRNA ligase">
    <location>
        <begin position="1"/>
        <end position="555"/>
    </location>
</feature>
<feature type="short sequence motif" description="'HIGH' region" evidence="1">
    <location>
        <begin position="34"/>
        <end position="44"/>
    </location>
</feature>
<feature type="short sequence motif" description="'KMSKS' region" evidence="1">
    <location>
        <begin position="268"/>
        <end position="272"/>
    </location>
</feature>
<feature type="binding site" evidence="1">
    <location>
        <begin position="35"/>
        <end position="37"/>
    </location>
    <ligand>
        <name>ATP</name>
        <dbReference type="ChEBI" id="CHEBI:30616"/>
    </ligand>
</feature>
<feature type="binding site" evidence="1">
    <location>
        <begin position="41"/>
        <end position="47"/>
    </location>
    <ligand>
        <name>ATP</name>
        <dbReference type="ChEBI" id="CHEBI:30616"/>
    </ligand>
</feature>
<feature type="binding site" evidence="1">
    <location>
        <position position="67"/>
    </location>
    <ligand>
        <name>L-glutamine</name>
        <dbReference type="ChEBI" id="CHEBI:58359"/>
    </ligand>
</feature>
<feature type="binding site" evidence="1">
    <location>
        <position position="212"/>
    </location>
    <ligand>
        <name>L-glutamine</name>
        <dbReference type="ChEBI" id="CHEBI:58359"/>
    </ligand>
</feature>
<feature type="binding site" evidence="1">
    <location>
        <position position="231"/>
    </location>
    <ligand>
        <name>ATP</name>
        <dbReference type="ChEBI" id="CHEBI:30616"/>
    </ligand>
</feature>
<feature type="binding site" evidence="1">
    <location>
        <begin position="261"/>
        <end position="262"/>
    </location>
    <ligand>
        <name>ATP</name>
        <dbReference type="ChEBI" id="CHEBI:30616"/>
    </ligand>
</feature>
<feature type="binding site" evidence="1">
    <location>
        <begin position="269"/>
        <end position="271"/>
    </location>
    <ligand>
        <name>ATP</name>
        <dbReference type="ChEBI" id="CHEBI:30616"/>
    </ligand>
</feature>
<dbReference type="EC" id="6.1.1.18" evidence="1"/>
<dbReference type="EMBL" id="AM942759">
    <property type="protein sequence ID" value="CAR41300.1"/>
    <property type="molecule type" value="Genomic_DNA"/>
</dbReference>
<dbReference type="RefSeq" id="WP_012367653.1">
    <property type="nucleotide sequence ID" value="NC_010554.1"/>
</dbReference>
<dbReference type="SMR" id="B4EV71"/>
<dbReference type="EnsemblBacteria" id="CAR41300">
    <property type="protein sequence ID" value="CAR41300"/>
    <property type="gene ID" value="PMI0539"/>
</dbReference>
<dbReference type="GeneID" id="6801487"/>
<dbReference type="KEGG" id="pmr:PMI0539"/>
<dbReference type="eggNOG" id="COG0008">
    <property type="taxonomic scope" value="Bacteria"/>
</dbReference>
<dbReference type="HOGENOM" id="CLU_001882_2_3_6"/>
<dbReference type="Proteomes" id="UP000008319">
    <property type="component" value="Chromosome"/>
</dbReference>
<dbReference type="GO" id="GO:0005829">
    <property type="term" value="C:cytosol"/>
    <property type="evidence" value="ECO:0007669"/>
    <property type="project" value="TreeGrafter"/>
</dbReference>
<dbReference type="GO" id="GO:0005524">
    <property type="term" value="F:ATP binding"/>
    <property type="evidence" value="ECO:0007669"/>
    <property type="project" value="UniProtKB-UniRule"/>
</dbReference>
<dbReference type="GO" id="GO:0004819">
    <property type="term" value="F:glutamine-tRNA ligase activity"/>
    <property type="evidence" value="ECO:0007669"/>
    <property type="project" value="UniProtKB-UniRule"/>
</dbReference>
<dbReference type="GO" id="GO:0006425">
    <property type="term" value="P:glutaminyl-tRNA aminoacylation"/>
    <property type="evidence" value="ECO:0007669"/>
    <property type="project" value="InterPro"/>
</dbReference>
<dbReference type="GO" id="GO:0006424">
    <property type="term" value="P:glutamyl-tRNA aminoacylation"/>
    <property type="evidence" value="ECO:0007669"/>
    <property type="project" value="UniProtKB-UniRule"/>
</dbReference>
<dbReference type="CDD" id="cd00807">
    <property type="entry name" value="GlnRS_core"/>
    <property type="match status" value="1"/>
</dbReference>
<dbReference type="FunFam" id="1.10.1160.10:FF:000001">
    <property type="entry name" value="Glutamine--tRNA ligase"/>
    <property type="match status" value="1"/>
</dbReference>
<dbReference type="FunFam" id="2.40.240.10:FF:000001">
    <property type="entry name" value="Glutamine--tRNA ligase"/>
    <property type="match status" value="1"/>
</dbReference>
<dbReference type="FunFam" id="2.40.240.10:FF:000003">
    <property type="entry name" value="Glutamine--tRNA ligase"/>
    <property type="match status" value="1"/>
</dbReference>
<dbReference type="FunFam" id="3.90.800.10:FF:000001">
    <property type="entry name" value="Glutamine--tRNA ligase"/>
    <property type="match status" value="1"/>
</dbReference>
<dbReference type="FunFam" id="3.40.50.620:FF:000037">
    <property type="entry name" value="Glutamine--tRNA ligase cytoplasmic"/>
    <property type="match status" value="1"/>
</dbReference>
<dbReference type="Gene3D" id="1.10.1160.10">
    <property type="entry name" value="Glutamyl-trna Synthetase, Domain 2"/>
    <property type="match status" value="1"/>
</dbReference>
<dbReference type="Gene3D" id="3.90.800.10">
    <property type="entry name" value="Glutamyl-tRNA Synthetase, Domain 3"/>
    <property type="match status" value="1"/>
</dbReference>
<dbReference type="Gene3D" id="3.40.50.620">
    <property type="entry name" value="HUPs"/>
    <property type="match status" value="1"/>
</dbReference>
<dbReference type="Gene3D" id="2.40.240.10">
    <property type="entry name" value="Ribosomal Protein L25, Chain P"/>
    <property type="match status" value="2"/>
</dbReference>
<dbReference type="HAMAP" id="MF_00126">
    <property type="entry name" value="Gln_tRNA_synth"/>
    <property type="match status" value="1"/>
</dbReference>
<dbReference type="InterPro" id="IPR001412">
    <property type="entry name" value="aa-tRNA-synth_I_CS"/>
</dbReference>
<dbReference type="InterPro" id="IPR004514">
    <property type="entry name" value="Gln-tRNA-synth"/>
</dbReference>
<dbReference type="InterPro" id="IPR050132">
    <property type="entry name" value="Gln/Glu-tRNA_Ligase"/>
</dbReference>
<dbReference type="InterPro" id="IPR022861">
    <property type="entry name" value="Gln_tRNA_ligase_bac"/>
</dbReference>
<dbReference type="InterPro" id="IPR000924">
    <property type="entry name" value="Glu/Gln-tRNA-synth"/>
</dbReference>
<dbReference type="InterPro" id="IPR020058">
    <property type="entry name" value="Glu/Gln-tRNA-synth_Ib_cat-dom"/>
</dbReference>
<dbReference type="InterPro" id="IPR020059">
    <property type="entry name" value="Glu/Gln-tRNA-synth_Ib_codon-bd"/>
</dbReference>
<dbReference type="InterPro" id="IPR020061">
    <property type="entry name" value="Glu_tRNA_lig_a-bdl"/>
</dbReference>
<dbReference type="InterPro" id="IPR020056">
    <property type="entry name" value="Rbsml_bL25/Gln-tRNA_synth_N"/>
</dbReference>
<dbReference type="InterPro" id="IPR011035">
    <property type="entry name" value="Ribosomal_bL25/Gln-tRNA_synth"/>
</dbReference>
<dbReference type="InterPro" id="IPR014729">
    <property type="entry name" value="Rossmann-like_a/b/a_fold"/>
</dbReference>
<dbReference type="InterPro" id="IPR049437">
    <property type="entry name" value="tRNA-synt_1c_C2"/>
</dbReference>
<dbReference type="NCBIfam" id="TIGR00440">
    <property type="entry name" value="glnS"/>
    <property type="match status" value="1"/>
</dbReference>
<dbReference type="NCBIfam" id="NF011291">
    <property type="entry name" value="PRK14703.1"/>
    <property type="match status" value="1"/>
</dbReference>
<dbReference type="PANTHER" id="PTHR43097:SF5">
    <property type="entry name" value="GLUTAMATE--TRNA LIGASE"/>
    <property type="match status" value="1"/>
</dbReference>
<dbReference type="PANTHER" id="PTHR43097">
    <property type="entry name" value="GLUTAMINE-TRNA LIGASE"/>
    <property type="match status" value="1"/>
</dbReference>
<dbReference type="Pfam" id="PF00749">
    <property type="entry name" value="tRNA-synt_1c"/>
    <property type="match status" value="1"/>
</dbReference>
<dbReference type="Pfam" id="PF03950">
    <property type="entry name" value="tRNA-synt_1c_C"/>
    <property type="match status" value="1"/>
</dbReference>
<dbReference type="Pfam" id="PF20974">
    <property type="entry name" value="tRNA-synt_1c_C2"/>
    <property type="match status" value="1"/>
</dbReference>
<dbReference type="PRINTS" id="PR00987">
    <property type="entry name" value="TRNASYNTHGLU"/>
</dbReference>
<dbReference type="SUPFAM" id="SSF52374">
    <property type="entry name" value="Nucleotidylyl transferase"/>
    <property type="match status" value="1"/>
</dbReference>
<dbReference type="SUPFAM" id="SSF50715">
    <property type="entry name" value="Ribosomal protein L25-like"/>
    <property type="match status" value="1"/>
</dbReference>
<dbReference type="PROSITE" id="PS00178">
    <property type="entry name" value="AA_TRNA_LIGASE_I"/>
    <property type="match status" value="1"/>
</dbReference>
<sequence length="555" mass="64124">MNEADARPTNFIRQIIDEDLATGKHNSVHTRFPPEPNGYLHIGHAKSICLNFGIAQDYQGKCNLRFDDTNPVKEDVEYINSIQKDVQWLGFQWDGNVHYSSDYFDQLYQYAIELINKGLAYVDELSAEEIREYRGTLKEPGKNSPYRSRSVEENLALFEKMRAGGFEEGKACLRAKIDMASPFIVMRDPVLYRIKFAEHHQTGNKWCIYPMYDFTHCISDALENITHSLCTLEFQDNRRLYDWVLDNITIPCHPRQYEFSRLNLEYTVMSKRKLNQLVTENIVDGWDDPRMPTISGLRRRGYTAESIREFCQRIGVTKQDNNVEMASLEACIRDDLNENAPRAMAVIDPVRLVIENMPEGEEILTAPNHPNKPEMGTREVPFSREIYIDRADFKEEANRQYKRLVLGKEVRLRNAYVIKAERVEKDEQGEITTIYCTYDPQTLNKDPADGRKVKGVIHWVSIPHAIPAEIRLYDRLFSVPNPGAEEDFLSTINPESLVIRQGFVEASLKDAAIEKAYQFEREGYFCADKLSTADKLVFNRTVGLRDTWAKISKQG</sequence>
<keyword id="KW-0030">Aminoacyl-tRNA synthetase</keyword>
<keyword id="KW-0067">ATP-binding</keyword>
<keyword id="KW-0963">Cytoplasm</keyword>
<keyword id="KW-0436">Ligase</keyword>
<keyword id="KW-0547">Nucleotide-binding</keyword>
<keyword id="KW-0648">Protein biosynthesis</keyword>
<keyword id="KW-1185">Reference proteome</keyword>
<proteinExistence type="inferred from homology"/>
<gene>
    <name evidence="1" type="primary">glnS</name>
    <name type="ordered locus">PMI0539</name>
</gene>
<organism>
    <name type="scientific">Proteus mirabilis (strain HI4320)</name>
    <dbReference type="NCBI Taxonomy" id="529507"/>
    <lineage>
        <taxon>Bacteria</taxon>
        <taxon>Pseudomonadati</taxon>
        <taxon>Pseudomonadota</taxon>
        <taxon>Gammaproteobacteria</taxon>
        <taxon>Enterobacterales</taxon>
        <taxon>Morganellaceae</taxon>
        <taxon>Proteus</taxon>
    </lineage>
</organism>
<reference key="1">
    <citation type="journal article" date="2008" name="J. Bacteriol.">
        <title>Complete genome sequence of uropathogenic Proteus mirabilis, a master of both adherence and motility.</title>
        <authorList>
            <person name="Pearson M.M."/>
            <person name="Sebaihia M."/>
            <person name="Churcher C."/>
            <person name="Quail M.A."/>
            <person name="Seshasayee A.S."/>
            <person name="Luscombe N.M."/>
            <person name="Abdellah Z."/>
            <person name="Arrosmith C."/>
            <person name="Atkin B."/>
            <person name="Chillingworth T."/>
            <person name="Hauser H."/>
            <person name="Jagels K."/>
            <person name="Moule S."/>
            <person name="Mungall K."/>
            <person name="Norbertczak H."/>
            <person name="Rabbinowitsch E."/>
            <person name="Walker D."/>
            <person name="Whithead S."/>
            <person name="Thomson N.R."/>
            <person name="Rather P.N."/>
            <person name="Parkhill J."/>
            <person name="Mobley H.L.T."/>
        </authorList>
    </citation>
    <scope>NUCLEOTIDE SEQUENCE [LARGE SCALE GENOMIC DNA]</scope>
    <source>
        <strain>HI4320</strain>
    </source>
</reference>
<protein>
    <recommendedName>
        <fullName evidence="1">Glutamine--tRNA ligase</fullName>
        <ecNumber evidence="1">6.1.1.18</ecNumber>
    </recommendedName>
    <alternativeName>
        <fullName evidence="1">Glutaminyl-tRNA synthetase</fullName>
        <shortName evidence="1">GlnRS</shortName>
    </alternativeName>
</protein>
<accession>B4EV71</accession>